<evidence type="ECO:0000250" key="1"/>
<evidence type="ECO:0000255" key="2"/>
<evidence type="ECO:0000305" key="3"/>
<dbReference type="EMBL" id="AC005623">
    <property type="status" value="NOT_ANNOTATED_CDS"/>
    <property type="molecule type" value="Genomic_DNA"/>
</dbReference>
<dbReference type="EMBL" id="CP002685">
    <property type="protein sequence ID" value="AEC07914.1"/>
    <property type="molecule type" value="Genomic_DNA"/>
</dbReference>
<dbReference type="EMBL" id="AK118724">
    <property type="protein sequence ID" value="BAC43318.1"/>
    <property type="molecule type" value="mRNA"/>
</dbReference>
<dbReference type="EMBL" id="BT004940">
    <property type="protein sequence ID" value="AAO50473.1"/>
    <property type="molecule type" value="mRNA"/>
</dbReference>
<dbReference type="RefSeq" id="NP_850091.1">
    <property type="nucleotide sequence ID" value="NM_179760.3"/>
</dbReference>
<dbReference type="SMR" id="Q8GWP3"/>
<dbReference type="BioGRID" id="2591">
    <property type="interactions" value="3"/>
</dbReference>
<dbReference type="FunCoup" id="Q8GWP3">
    <property type="interactions" value="1772"/>
</dbReference>
<dbReference type="IntAct" id="Q8GWP3">
    <property type="interactions" value="2"/>
</dbReference>
<dbReference type="STRING" id="3702.Q8GWP3"/>
<dbReference type="TCDB" id="1.A.56.1.14">
    <property type="family name" value="the copper transporter (ctr) family"/>
</dbReference>
<dbReference type="PaxDb" id="3702-AT2G26975.1"/>
<dbReference type="ProteomicsDB" id="241174"/>
<dbReference type="EnsemblPlants" id="AT2G26975.1">
    <property type="protein sequence ID" value="AT2G26975.1"/>
    <property type="gene ID" value="AT2G26975"/>
</dbReference>
<dbReference type="GeneID" id="817239"/>
<dbReference type="Gramene" id="AT2G26975.1">
    <property type="protein sequence ID" value="AT2G26975.1"/>
    <property type="gene ID" value="AT2G26975"/>
</dbReference>
<dbReference type="KEGG" id="ath:AT2G26975"/>
<dbReference type="Araport" id="AT2G26975"/>
<dbReference type="TAIR" id="AT2G26975">
    <property type="gene designation" value="COPT6"/>
</dbReference>
<dbReference type="eggNOG" id="KOG3386">
    <property type="taxonomic scope" value="Eukaryota"/>
</dbReference>
<dbReference type="HOGENOM" id="CLU_079690_1_2_1"/>
<dbReference type="InParanoid" id="Q8GWP3"/>
<dbReference type="OMA" id="FLHTIRV"/>
<dbReference type="PhylomeDB" id="Q8GWP3"/>
<dbReference type="PRO" id="PR:Q8GWP3"/>
<dbReference type="Proteomes" id="UP000006548">
    <property type="component" value="Chromosome 2"/>
</dbReference>
<dbReference type="ExpressionAtlas" id="Q8GWP3">
    <property type="expression patterns" value="baseline and differential"/>
</dbReference>
<dbReference type="GO" id="GO:0000325">
    <property type="term" value="C:plant-type vacuole"/>
    <property type="evidence" value="ECO:0007005"/>
    <property type="project" value="TAIR"/>
</dbReference>
<dbReference type="GO" id="GO:0005886">
    <property type="term" value="C:plasma membrane"/>
    <property type="evidence" value="ECO:0000314"/>
    <property type="project" value="TAIR"/>
</dbReference>
<dbReference type="GO" id="GO:0005375">
    <property type="term" value="F:copper ion transmembrane transporter activity"/>
    <property type="evidence" value="ECO:0000316"/>
    <property type="project" value="TAIR"/>
</dbReference>
<dbReference type="GO" id="GO:0035434">
    <property type="term" value="P:copper ion transmembrane transport"/>
    <property type="evidence" value="ECO:0000316"/>
    <property type="project" value="TAIR"/>
</dbReference>
<dbReference type="InterPro" id="IPR007274">
    <property type="entry name" value="Cop_transporter"/>
</dbReference>
<dbReference type="PANTHER" id="PTHR12483:SF24">
    <property type="entry name" value="COPPER TRANSPORTER 2-RELATED"/>
    <property type="match status" value="1"/>
</dbReference>
<dbReference type="PANTHER" id="PTHR12483">
    <property type="entry name" value="SOLUTE CARRIER FAMILY 31 COPPER TRANSPORTERS"/>
    <property type="match status" value="1"/>
</dbReference>
<dbReference type="Pfam" id="PF04145">
    <property type="entry name" value="Ctr"/>
    <property type="match status" value="2"/>
</dbReference>
<gene>
    <name type="primary">COPT6</name>
    <name type="ordered locus">At2g26975</name>
    <name type="ORF">T20P8</name>
</gene>
<feature type="chain" id="PRO_0000399997" description="Copper transporter 6">
    <location>
        <begin position="1"/>
        <end position="145"/>
    </location>
</feature>
<feature type="transmembrane region" description="Helical" evidence="2">
    <location>
        <begin position="47"/>
        <end position="67"/>
    </location>
</feature>
<feature type="transmembrane region" description="Helical" evidence="2">
    <location>
        <begin position="99"/>
        <end position="119"/>
    </location>
</feature>
<comment type="function">
    <text evidence="1">Involved in the transport of copper.</text>
</comment>
<comment type="subcellular location">
    <subcellularLocation>
        <location evidence="3">Membrane</location>
        <topology evidence="3">Multi-pass membrane protein</topology>
    </subcellularLocation>
</comment>
<comment type="similarity">
    <text evidence="3">Belongs to the copper transporter (Ctr) (TC 1.A.56) family. SLC31A subfamily.</text>
</comment>
<protein>
    <recommendedName>
        <fullName>Copper transporter 6</fullName>
        <shortName>AtCOPT6</shortName>
    </recommendedName>
</protein>
<sequence>MDHGNMPPSSPSSMVNHTNSNMIMMHMTFFWGKNTEILFSGWPGTSLGMYVLCLIVVFLLAVIVEWLAHSSILRGRGSTSRAKGLVQTAVYTLKTGLAYLVMLAVMSFNGGVFIVAIAGFAVGFMLFGSTAFKNPSDDEKPFEQL</sequence>
<accession>Q8GWP3</accession>
<keyword id="KW-0186">Copper</keyword>
<keyword id="KW-0187">Copper transport</keyword>
<keyword id="KW-0406">Ion transport</keyword>
<keyword id="KW-0472">Membrane</keyword>
<keyword id="KW-1185">Reference proteome</keyword>
<keyword id="KW-0812">Transmembrane</keyword>
<keyword id="KW-1133">Transmembrane helix</keyword>
<keyword id="KW-0813">Transport</keyword>
<name>COPT6_ARATH</name>
<proteinExistence type="evidence at transcript level"/>
<reference key="1">
    <citation type="journal article" date="1999" name="Nature">
        <title>Sequence and analysis of chromosome 2 of the plant Arabidopsis thaliana.</title>
        <authorList>
            <person name="Lin X."/>
            <person name="Kaul S."/>
            <person name="Rounsley S.D."/>
            <person name="Shea T.P."/>
            <person name="Benito M.-I."/>
            <person name="Town C.D."/>
            <person name="Fujii C.Y."/>
            <person name="Mason T.M."/>
            <person name="Bowman C.L."/>
            <person name="Barnstead M.E."/>
            <person name="Feldblyum T.V."/>
            <person name="Buell C.R."/>
            <person name="Ketchum K.A."/>
            <person name="Lee J.J."/>
            <person name="Ronning C.M."/>
            <person name="Koo H.L."/>
            <person name="Moffat K.S."/>
            <person name="Cronin L.A."/>
            <person name="Shen M."/>
            <person name="Pai G."/>
            <person name="Van Aken S."/>
            <person name="Umayam L."/>
            <person name="Tallon L.J."/>
            <person name="Gill J.E."/>
            <person name="Adams M.D."/>
            <person name="Carrera A.J."/>
            <person name="Creasy T.H."/>
            <person name="Goodman H.M."/>
            <person name="Somerville C.R."/>
            <person name="Copenhaver G.P."/>
            <person name="Preuss D."/>
            <person name="Nierman W.C."/>
            <person name="White O."/>
            <person name="Eisen J.A."/>
            <person name="Salzberg S.L."/>
            <person name="Fraser C.M."/>
            <person name="Venter J.C."/>
        </authorList>
    </citation>
    <scope>NUCLEOTIDE SEQUENCE [LARGE SCALE GENOMIC DNA]</scope>
    <source>
        <strain>cv. Columbia</strain>
    </source>
</reference>
<reference key="2">
    <citation type="journal article" date="2017" name="Plant J.">
        <title>Araport11: a complete reannotation of the Arabidopsis thaliana reference genome.</title>
        <authorList>
            <person name="Cheng C.Y."/>
            <person name="Krishnakumar V."/>
            <person name="Chan A.P."/>
            <person name="Thibaud-Nissen F."/>
            <person name="Schobel S."/>
            <person name="Town C.D."/>
        </authorList>
    </citation>
    <scope>GENOME REANNOTATION</scope>
    <source>
        <strain>cv. Columbia</strain>
    </source>
</reference>
<reference key="3">
    <citation type="journal article" date="2002" name="Science">
        <title>Functional annotation of a full-length Arabidopsis cDNA collection.</title>
        <authorList>
            <person name="Seki M."/>
            <person name="Narusaka M."/>
            <person name="Kamiya A."/>
            <person name="Ishida J."/>
            <person name="Satou M."/>
            <person name="Sakurai T."/>
            <person name="Nakajima M."/>
            <person name="Enju A."/>
            <person name="Akiyama K."/>
            <person name="Oono Y."/>
            <person name="Muramatsu M."/>
            <person name="Hayashizaki Y."/>
            <person name="Kawai J."/>
            <person name="Carninci P."/>
            <person name="Itoh M."/>
            <person name="Ishii Y."/>
            <person name="Arakawa T."/>
            <person name="Shibata K."/>
            <person name="Shinagawa A."/>
            <person name="Shinozaki K."/>
        </authorList>
    </citation>
    <scope>NUCLEOTIDE SEQUENCE [LARGE SCALE MRNA]</scope>
    <source>
        <strain>cv. Columbia</strain>
    </source>
</reference>
<reference key="4">
    <citation type="journal article" date="2003" name="Science">
        <title>Empirical analysis of transcriptional activity in the Arabidopsis genome.</title>
        <authorList>
            <person name="Yamada K."/>
            <person name="Lim J."/>
            <person name="Dale J.M."/>
            <person name="Chen H."/>
            <person name="Shinn P."/>
            <person name="Palm C.J."/>
            <person name="Southwick A.M."/>
            <person name="Wu H.C."/>
            <person name="Kim C.J."/>
            <person name="Nguyen M."/>
            <person name="Pham P.K."/>
            <person name="Cheuk R.F."/>
            <person name="Karlin-Newmann G."/>
            <person name="Liu S.X."/>
            <person name="Lam B."/>
            <person name="Sakano H."/>
            <person name="Wu T."/>
            <person name="Yu G."/>
            <person name="Miranda M."/>
            <person name="Quach H.L."/>
            <person name="Tripp M."/>
            <person name="Chang C.H."/>
            <person name="Lee J.M."/>
            <person name="Toriumi M.J."/>
            <person name="Chan M.M."/>
            <person name="Tang C.C."/>
            <person name="Onodera C.S."/>
            <person name="Deng J.M."/>
            <person name="Akiyama K."/>
            <person name="Ansari Y."/>
            <person name="Arakawa T."/>
            <person name="Banh J."/>
            <person name="Banno F."/>
            <person name="Bowser L."/>
            <person name="Brooks S.Y."/>
            <person name="Carninci P."/>
            <person name="Chao Q."/>
            <person name="Choy N."/>
            <person name="Enju A."/>
            <person name="Goldsmith A.D."/>
            <person name="Gurjal M."/>
            <person name="Hansen N.F."/>
            <person name="Hayashizaki Y."/>
            <person name="Johnson-Hopson C."/>
            <person name="Hsuan V.W."/>
            <person name="Iida K."/>
            <person name="Karnes M."/>
            <person name="Khan S."/>
            <person name="Koesema E."/>
            <person name="Ishida J."/>
            <person name="Jiang P.X."/>
            <person name="Jones T."/>
            <person name="Kawai J."/>
            <person name="Kamiya A."/>
            <person name="Meyers C."/>
            <person name="Nakajima M."/>
            <person name="Narusaka M."/>
            <person name="Seki M."/>
            <person name="Sakurai T."/>
            <person name="Satou M."/>
            <person name="Tamse R."/>
            <person name="Vaysberg M."/>
            <person name="Wallender E.K."/>
            <person name="Wong C."/>
            <person name="Yamamura Y."/>
            <person name="Yuan S."/>
            <person name="Shinozaki K."/>
            <person name="Davis R.W."/>
            <person name="Theologis A."/>
            <person name="Ecker J.R."/>
        </authorList>
    </citation>
    <scope>NUCLEOTIDE SEQUENCE [LARGE SCALE MRNA]</scope>
    <source>
        <strain>cv. Columbia</strain>
    </source>
</reference>
<organism>
    <name type="scientific">Arabidopsis thaliana</name>
    <name type="common">Mouse-ear cress</name>
    <dbReference type="NCBI Taxonomy" id="3702"/>
    <lineage>
        <taxon>Eukaryota</taxon>
        <taxon>Viridiplantae</taxon>
        <taxon>Streptophyta</taxon>
        <taxon>Embryophyta</taxon>
        <taxon>Tracheophyta</taxon>
        <taxon>Spermatophyta</taxon>
        <taxon>Magnoliopsida</taxon>
        <taxon>eudicotyledons</taxon>
        <taxon>Gunneridae</taxon>
        <taxon>Pentapetalae</taxon>
        <taxon>rosids</taxon>
        <taxon>malvids</taxon>
        <taxon>Brassicales</taxon>
        <taxon>Brassicaceae</taxon>
        <taxon>Camelineae</taxon>
        <taxon>Arabidopsis</taxon>
    </lineage>
</organism>